<dbReference type="EMBL" id="CP000859">
    <property type="protein sequence ID" value="ABW68299.1"/>
    <property type="molecule type" value="Genomic_DNA"/>
</dbReference>
<dbReference type="RefSeq" id="WP_012175911.1">
    <property type="nucleotide sequence ID" value="NC_009943.1"/>
</dbReference>
<dbReference type="SMR" id="A8ZW65"/>
<dbReference type="STRING" id="96561.Dole_2495"/>
<dbReference type="KEGG" id="dol:Dole_2495"/>
<dbReference type="eggNOG" id="COG1220">
    <property type="taxonomic scope" value="Bacteria"/>
</dbReference>
<dbReference type="HOGENOM" id="CLU_033123_0_0_7"/>
<dbReference type="OrthoDB" id="9804062at2"/>
<dbReference type="Proteomes" id="UP000008561">
    <property type="component" value="Chromosome"/>
</dbReference>
<dbReference type="GO" id="GO:0009376">
    <property type="term" value="C:HslUV protease complex"/>
    <property type="evidence" value="ECO:0007669"/>
    <property type="project" value="UniProtKB-UniRule"/>
</dbReference>
<dbReference type="GO" id="GO:0005524">
    <property type="term" value="F:ATP binding"/>
    <property type="evidence" value="ECO:0007669"/>
    <property type="project" value="UniProtKB-UniRule"/>
</dbReference>
<dbReference type="GO" id="GO:0016887">
    <property type="term" value="F:ATP hydrolysis activity"/>
    <property type="evidence" value="ECO:0007669"/>
    <property type="project" value="InterPro"/>
</dbReference>
<dbReference type="GO" id="GO:0008233">
    <property type="term" value="F:peptidase activity"/>
    <property type="evidence" value="ECO:0007669"/>
    <property type="project" value="InterPro"/>
</dbReference>
<dbReference type="GO" id="GO:0036402">
    <property type="term" value="F:proteasome-activating activity"/>
    <property type="evidence" value="ECO:0007669"/>
    <property type="project" value="UniProtKB-UniRule"/>
</dbReference>
<dbReference type="GO" id="GO:0043335">
    <property type="term" value="P:protein unfolding"/>
    <property type="evidence" value="ECO:0007669"/>
    <property type="project" value="UniProtKB-UniRule"/>
</dbReference>
<dbReference type="GO" id="GO:0051603">
    <property type="term" value="P:proteolysis involved in protein catabolic process"/>
    <property type="evidence" value="ECO:0007669"/>
    <property type="project" value="TreeGrafter"/>
</dbReference>
<dbReference type="CDD" id="cd19498">
    <property type="entry name" value="RecA-like_HslU"/>
    <property type="match status" value="1"/>
</dbReference>
<dbReference type="FunFam" id="3.40.50.300:FF:000213">
    <property type="entry name" value="ATP-dependent protease ATPase subunit HslU"/>
    <property type="match status" value="1"/>
</dbReference>
<dbReference type="FunFam" id="3.40.50.300:FF:000220">
    <property type="entry name" value="ATP-dependent protease ATPase subunit HslU"/>
    <property type="match status" value="1"/>
</dbReference>
<dbReference type="Gene3D" id="1.10.8.60">
    <property type="match status" value="1"/>
</dbReference>
<dbReference type="Gene3D" id="3.40.50.300">
    <property type="entry name" value="P-loop containing nucleotide triphosphate hydrolases"/>
    <property type="match status" value="2"/>
</dbReference>
<dbReference type="HAMAP" id="MF_00249">
    <property type="entry name" value="HslU"/>
    <property type="match status" value="1"/>
</dbReference>
<dbReference type="InterPro" id="IPR003593">
    <property type="entry name" value="AAA+_ATPase"/>
</dbReference>
<dbReference type="InterPro" id="IPR050052">
    <property type="entry name" value="ATP-dep_Clp_protease_ClpX"/>
</dbReference>
<dbReference type="InterPro" id="IPR003959">
    <property type="entry name" value="ATPase_AAA_core"/>
</dbReference>
<dbReference type="InterPro" id="IPR019489">
    <property type="entry name" value="Clp_ATPase_C"/>
</dbReference>
<dbReference type="InterPro" id="IPR004491">
    <property type="entry name" value="HslU"/>
</dbReference>
<dbReference type="InterPro" id="IPR027417">
    <property type="entry name" value="P-loop_NTPase"/>
</dbReference>
<dbReference type="NCBIfam" id="TIGR00390">
    <property type="entry name" value="hslU"/>
    <property type="match status" value="1"/>
</dbReference>
<dbReference type="NCBIfam" id="NF003544">
    <property type="entry name" value="PRK05201.1"/>
    <property type="match status" value="1"/>
</dbReference>
<dbReference type="PANTHER" id="PTHR48102">
    <property type="entry name" value="ATP-DEPENDENT CLP PROTEASE ATP-BINDING SUBUNIT CLPX-LIKE, MITOCHONDRIAL-RELATED"/>
    <property type="match status" value="1"/>
</dbReference>
<dbReference type="PANTHER" id="PTHR48102:SF3">
    <property type="entry name" value="ATP-DEPENDENT PROTEASE ATPASE SUBUNIT HSLU"/>
    <property type="match status" value="1"/>
</dbReference>
<dbReference type="Pfam" id="PF00004">
    <property type="entry name" value="AAA"/>
    <property type="match status" value="1"/>
</dbReference>
<dbReference type="Pfam" id="PF07724">
    <property type="entry name" value="AAA_2"/>
    <property type="match status" value="1"/>
</dbReference>
<dbReference type="SMART" id="SM00382">
    <property type="entry name" value="AAA"/>
    <property type="match status" value="1"/>
</dbReference>
<dbReference type="SMART" id="SM01086">
    <property type="entry name" value="ClpB_D2-small"/>
    <property type="match status" value="1"/>
</dbReference>
<dbReference type="SUPFAM" id="SSF52540">
    <property type="entry name" value="P-loop containing nucleoside triphosphate hydrolases"/>
    <property type="match status" value="1"/>
</dbReference>
<feature type="chain" id="PRO_1000100944" description="ATP-dependent protease ATPase subunit HslU">
    <location>
        <begin position="1"/>
        <end position="456"/>
    </location>
</feature>
<feature type="binding site" evidence="1">
    <location>
        <position position="18"/>
    </location>
    <ligand>
        <name>ATP</name>
        <dbReference type="ChEBI" id="CHEBI:30616"/>
    </ligand>
</feature>
<feature type="binding site" evidence="1">
    <location>
        <begin position="60"/>
        <end position="65"/>
    </location>
    <ligand>
        <name>ATP</name>
        <dbReference type="ChEBI" id="CHEBI:30616"/>
    </ligand>
</feature>
<feature type="binding site" evidence="1">
    <location>
        <position position="269"/>
    </location>
    <ligand>
        <name>ATP</name>
        <dbReference type="ChEBI" id="CHEBI:30616"/>
    </ligand>
</feature>
<feature type="binding site" evidence="1">
    <location>
        <position position="334"/>
    </location>
    <ligand>
        <name>ATP</name>
        <dbReference type="ChEBI" id="CHEBI:30616"/>
    </ligand>
</feature>
<feature type="binding site" evidence="1">
    <location>
        <position position="406"/>
    </location>
    <ligand>
        <name>ATP</name>
        <dbReference type="ChEBI" id="CHEBI:30616"/>
    </ligand>
</feature>
<gene>
    <name evidence="1" type="primary">hslU</name>
    <name type="ordered locus">Dole_2495</name>
</gene>
<accession>A8ZW65</accession>
<organism>
    <name type="scientific">Desulfosudis oleivorans (strain DSM 6200 / JCM 39069 / Hxd3)</name>
    <name type="common">Desulfococcus oleovorans</name>
    <dbReference type="NCBI Taxonomy" id="96561"/>
    <lineage>
        <taxon>Bacteria</taxon>
        <taxon>Pseudomonadati</taxon>
        <taxon>Thermodesulfobacteriota</taxon>
        <taxon>Desulfobacteria</taxon>
        <taxon>Desulfobacterales</taxon>
        <taxon>Desulfosudaceae</taxon>
        <taxon>Desulfosudis</taxon>
    </lineage>
</organism>
<proteinExistence type="inferred from homology"/>
<keyword id="KW-0067">ATP-binding</keyword>
<keyword id="KW-0143">Chaperone</keyword>
<keyword id="KW-0963">Cytoplasm</keyword>
<keyword id="KW-0547">Nucleotide-binding</keyword>
<keyword id="KW-1185">Reference proteome</keyword>
<keyword id="KW-0346">Stress response</keyword>
<reference key="1">
    <citation type="submission" date="2007-10" db="EMBL/GenBank/DDBJ databases">
        <title>Complete sequence of Desulfococcus oleovorans Hxd3.</title>
        <authorList>
            <consortium name="US DOE Joint Genome Institute"/>
            <person name="Copeland A."/>
            <person name="Lucas S."/>
            <person name="Lapidus A."/>
            <person name="Barry K."/>
            <person name="Glavina del Rio T."/>
            <person name="Dalin E."/>
            <person name="Tice H."/>
            <person name="Pitluck S."/>
            <person name="Kiss H."/>
            <person name="Brettin T."/>
            <person name="Bruce D."/>
            <person name="Detter J.C."/>
            <person name="Han C."/>
            <person name="Schmutz J."/>
            <person name="Larimer F."/>
            <person name="Land M."/>
            <person name="Hauser L."/>
            <person name="Kyrpides N."/>
            <person name="Kim E."/>
            <person name="Wawrik B."/>
            <person name="Richardson P."/>
        </authorList>
    </citation>
    <scope>NUCLEOTIDE SEQUENCE [LARGE SCALE GENOMIC DNA]</scope>
    <source>
        <strain>DSM 6200 / JCM 39069 / Hxd3</strain>
    </source>
</reference>
<evidence type="ECO:0000255" key="1">
    <source>
        <dbReference type="HAMAP-Rule" id="MF_00249"/>
    </source>
</evidence>
<sequence>MSDLTPAEIVIELDKYIVGQAKAKRSVAIALRNRWRRRQVPEAMREEIAPKNIILIGPTGVGKTEIARRLARLTDSPFLKIEASKFTEVGYVGRDVESMVRDLVELTVTHLKVSEREAVREKAVRLAEERILDVLLPRPEGPQRADGDEPLGSHIEIVSDDDGRVSTREKLRTMLRAGKLKDRYVDLELADRSMPMVEIFSNSGLEEMGVNFKDMFAGLLPKNKKRRKVKVPEALEMLTDEEAQNLVDMDRVVRMAVEKVEQSGIIFLDEIDKIVATSKGSGPDVSREGVQRDLLPIVEGSTVMTKHGAVKTDHILFIASGAFHMCKPSDLIPELQGRFPIRVELDALGKEEFFRILIEPENALLLQYIELLRTEGVDVAFADEAVREIAAMAEEVNAGTENIGARRLHTLMEYLLEDLLFDAPDRAGTKVAIDRAYVTDRLKTIRGNEDLSRFIL</sequence>
<comment type="function">
    <text evidence="1">ATPase subunit of a proteasome-like degradation complex; this subunit has chaperone activity. The binding of ATP and its subsequent hydrolysis by HslU are essential for unfolding of protein substrates subsequently hydrolyzed by HslV. HslU recognizes the N-terminal part of its protein substrates and unfolds these before they are guided to HslV for hydrolysis.</text>
</comment>
<comment type="subunit">
    <text evidence="1">A double ring-shaped homohexamer of HslV is capped on each side by a ring-shaped HslU homohexamer. The assembly of the HslU/HslV complex is dependent on binding of ATP.</text>
</comment>
<comment type="subcellular location">
    <subcellularLocation>
        <location evidence="1">Cytoplasm</location>
    </subcellularLocation>
</comment>
<comment type="similarity">
    <text evidence="1">Belongs to the ClpX chaperone family. HslU subfamily.</text>
</comment>
<protein>
    <recommendedName>
        <fullName evidence="1">ATP-dependent protease ATPase subunit HslU</fullName>
    </recommendedName>
    <alternativeName>
        <fullName evidence="1">Unfoldase HslU</fullName>
    </alternativeName>
</protein>
<name>HSLU_DESOH</name>